<dbReference type="EC" id="3.6.5.2" evidence="2"/>
<dbReference type="EMBL" id="CR857878">
    <property type="protein sequence ID" value="CAH90131.1"/>
    <property type="molecule type" value="mRNA"/>
</dbReference>
<dbReference type="EMBL" id="CR857988">
    <property type="protein sequence ID" value="CAH90231.1"/>
    <property type="molecule type" value="mRNA"/>
</dbReference>
<dbReference type="RefSeq" id="NP_001125027.1">
    <property type="nucleotide sequence ID" value="NM_001131555.1"/>
</dbReference>
<dbReference type="RefSeq" id="XP_024111846.1">
    <property type="nucleotide sequence ID" value="XM_024256078.3"/>
</dbReference>
<dbReference type="RefSeq" id="XP_024111848.1">
    <property type="nucleotide sequence ID" value="XM_024256080.2"/>
</dbReference>
<dbReference type="RefSeq" id="XP_024111849.1">
    <property type="nucleotide sequence ID" value="XM_024256081.2"/>
</dbReference>
<dbReference type="RefSeq" id="XP_054382282.1">
    <property type="nucleotide sequence ID" value="XM_054526307.1"/>
</dbReference>
<dbReference type="RefSeq" id="XP_054382283.1">
    <property type="nucleotide sequence ID" value="XM_054526308.2"/>
</dbReference>
<dbReference type="RefSeq" id="XP_054382284.1">
    <property type="nucleotide sequence ID" value="XM_054526309.2"/>
</dbReference>
<dbReference type="RefSeq" id="XP_063567596.1">
    <property type="nucleotide sequence ID" value="XM_063711526.1"/>
</dbReference>
<dbReference type="RefSeq" id="XP_063567597.1">
    <property type="nucleotide sequence ID" value="XM_063711527.1"/>
</dbReference>
<dbReference type="RefSeq" id="XP_063567599.1">
    <property type="nucleotide sequence ID" value="XM_063711529.1"/>
</dbReference>
<dbReference type="SMR" id="Q5RDM6"/>
<dbReference type="FunCoup" id="Q5RDM6">
    <property type="interactions" value="3098"/>
</dbReference>
<dbReference type="STRING" id="9601.ENSPPYP00000005412"/>
<dbReference type="Ensembl" id="ENSPPYT00000043100.1">
    <property type="protein sequence ID" value="ENSPPYP00000045627.1"/>
    <property type="gene ID" value="ENSPPYG00000004751.3"/>
</dbReference>
<dbReference type="GeneID" id="100171907"/>
<dbReference type="KEGG" id="pon:100171907"/>
<dbReference type="CTD" id="5908"/>
<dbReference type="eggNOG" id="KOG0395">
    <property type="taxonomic scope" value="Eukaryota"/>
</dbReference>
<dbReference type="GeneTree" id="ENSGT00940000154429"/>
<dbReference type="HOGENOM" id="CLU_041217_9_8_1"/>
<dbReference type="InParanoid" id="Q5RDM6"/>
<dbReference type="OMA" id="MPLREFK"/>
<dbReference type="OrthoDB" id="5976022at2759"/>
<dbReference type="TreeFam" id="TF313014"/>
<dbReference type="Proteomes" id="UP000001595">
    <property type="component" value="Chromosome 12"/>
</dbReference>
<dbReference type="GO" id="GO:0005911">
    <property type="term" value="C:cell-cell junction"/>
    <property type="evidence" value="ECO:0000250"/>
    <property type="project" value="UniProtKB"/>
</dbReference>
<dbReference type="GO" id="GO:0005829">
    <property type="term" value="C:cytosol"/>
    <property type="evidence" value="ECO:0007669"/>
    <property type="project" value="UniProtKB-SubCell"/>
</dbReference>
<dbReference type="GO" id="GO:0098978">
    <property type="term" value="C:glutamatergic synapse"/>
    <property type="evidence" value="ECO:0007669"/>
    <property type="project" value="Ensembl"/>
</dbReference>
<dbReference type="GO" id="GO:0005811">
    <property type="term" value="C:lipid droplet"/>
    <property type="evidence" value="ECO:0007669"/>
    <property type="project" value="Ensembl"/>
</dbReference>
<dbReference type="GO" id="GO:0005886">
    <property type="term" value="C:plasma membrane"/>
    <property type="evidence" value="ECO:0007669"/>
    <property type="project" value="UniProtKB-SubCell"/>
</dbReference>
<dbReference type="GO" id="GO:0003925">
    <property type="term" value="F:G protein activity"/>
    <property type="evidence" value="ECO:0007669"/>
    <property type="project" value="UniProtKB-EC"/>
</dbReference>
<dbReference type="GO" id="GO:0019003">
    <property type="term" value="F:GDP binding"/>
    <property type="evidence" value="ECO:0000250"/>
    <property type="project" value="UniProtKB"/>
</dbReference>
<dbReference type="GO" id="GO:0005525">
    <property type="term" value="F:GTP binding"/>
    <property type="evidence" value="ECO:0000250"/>
    <property type="project" value="UniProtKB"/>
</dbReference>
<dbReference type="GO" id="GO:0003924">
    <property type="term" value="F:GTPase activity"/>
    <property type="evidence" value="ECO:0000250"/>
    <property type="project" value="UniProtKB"/>
</dbReference>
<dbReference type="GO" id="GO:0044877">
    <property type="term" value="F:protein-containing complex binding"/>
    <property type="evidence" value="ECO:0007669"/>
    <property type="project" value="Ensembl"/>
</dbReference>
<dbReference type="GO" id="GO:0017156">
    <property type="term" value="P:calcium-ion regulated exocytosis"/>
    <property type="evidence" value="ECO:0007669"/>
    <property type="project" value="Ensembl"/>
</dbReference>
<dbReference type="GO" id="GO:0008283">
    <property type="term" value="P:cell population proliferation"/>
    <property type="evidence" value="ECO:0007669"/>
    <property type="project" value="Ensembl"/>
</dbReference>
<dbReference type="GO" id="GO:0071320">
    <property type="term" value="P:cellular response to cAMP"/>
    <property type="evidence" value="ECO:0000250"/>
    <property type="project" value="UniProtKB"/>
</dbReference>
<dbReference type="GO" id="GO:0061028">
    <property type="term" value="P:establishment of endothelial barrier"/>
    <property type="evidence" value="ECO:0000250"/>
    <property type="project" value="UniProtKB"/>
</dbReference>
<dbReference type="GO" id="GO:0051649">
    <property type="term" value="P:establishment of localization in cell"/>
    <property type="evidence" value="ECO:0007669"/>
    <property type="project" value="Ensembl"/>
</dbReference>
<dbReference type="GO" id="GO:0099010">
    <property type="term" value="P:modification of postsynaptic structure"/>
    <property type="evidence" value="ECO:0007669"/>
    <property type="project" value="Ensembl"/>
</dbReference>
<dbReference type="GO" id="GO:0045955">
    <property type="term" value="P:negative regulation of calcium ion-dependent exocytosis"/>
    <property type="evidence" value="ECO:0007669"/>
    <property type="project" value="Ensembl"/>
</dbReference>
<dbReference type="GO" id="GO:2000301">
    <property type="term" value="P:negative regulation of synaptic vesicle exocytosis"/>
    <property type="evidence" value="ECO:0007669"/>
    <property type="project" value="Ensembl"/>
</dbReference>
<dbReference type="GO" id="GO:0070374">
    <property type="term" value="P:positive regulation of ERK1 and ERK2 cascade"/>
    <property type="evidence" value="ECO:0007669"/>
    <property type="project" value="Ensembl"/>
</dbReference>
<dbReference type="GO" id="GO:0033625">
    <property type="term" value="P:positive regulation of integrin activation"/>
    <property type="evidence" value="ECO:0007669"/>
    <property type="project" value="Ensembl"/>
</dbReference>
<dbReference type="GO" id="GO:0032486">
    <property type="term" value="P:Rap protein signal transduction"/>
    <property type="evidence" value="ECO:0000250"/>
    <property type="project" value="UniProtKB"/>
</dbReference>
<dbReference type="GO" id="GO:1901888">
    <property type="term" value="P:regulation of cell junction assembly"/>
    <property type="evidence" value="ECO:0000250"/>
    <property type="project" value="UniProtKB"/>
</dbReference>
<dbReference type="GO" id="GO:2000114">
    <property type="term" value="P:regulation of establishment of cell polarity"/>
    <property type="evidence" value="ECO:0000250"/>
    <property type="project" value="UniProtKB"/>
</dbReference>
<dbReference type="CDD" id="cd04175">
    <property type="entry name" value="Rap1"/>
    <property type="match status" value="1"/>
</dbReference>
<dbReference type="FunFam" id="3.40.50.300:FF:000182">
    <property type="entry name" value="ras-related protein Rap-1b"/>
    <property type="match status" value="1"/>
</dbReference>
<dbReference type="Gene3D" id="3.40.50.300">
    <property type="entry name" value="P-loop containing nucleotide triphosphate hydrolases"/>
    <property type="match status" value="1"/>
</dbReference>
<dbReference type="InterPro" id="IPR027417">
    <property type="entry name" value="P-loop_NTPase"/>
</dbReference>
<dbReference type="InterPro" id="IPR038851">
    <property type="entry name" value="Rap1"/>
</dbReference>
<dbReference type="InterPro" id="IPR005225">
    <property type="entry name" value="Small_GTP-bd"/>
</dbReference>
<dbReference type="InterPro" id="IPR001806">
    <property type="entry name" value="Small_GTPase"/>
</dbReference>
<dbReference type="InterPro" id="IPR020849">
    <property type="entry name" value="Small_GTPase_Ras-type"/>
</dbReference>
<dbReference type="NCBIfam" id="TIGR00231">
    <property type="entry name" value="small_GTP"/>
    <property type="match status" value="1"/>
</dbReference>
<dbReference type="PANTHER" id="PTHR24070">
    <property type="entry name" value="RAS, DI-RAS, AND RHEB FAMILY MEMBERS OF SMALL GTPASE SUPERFAMILY"/>
    <property type="match status" value="1"/>
</dbReference>
<dbReference type="Pfam" id="PF00071">
    <property type="entry name" value="Ras"/>
    <property type="match status" value="1"/>
</dbReference>
<dbReference type="PRINTS" id="PR00449">
    <property type="entry name" value="RASTRNSFRMNG"/>
</dbReference>
<dbReference type="SMART" id="SM00175">
    <property type="entry name" value="RAB"/>
    <property type="match status" value="1"/>
</dbReference>
<dbReference type="SMART" id="SM00176">
    <property type="entry name" value="RAN"/>
    <property type="match status" value="1"/>
</dbReference>
<dbReference type="SMART" id="SM00173">
    <property type="entry name" value="RAS"/>
    <property type="match status" value="1"/>
</dbReference>
<dbReference type="SMART" id="SM00174">
    <property type="entry name" value="RHO"/>
    <property type="match status" value="1"/>
</dbReference>
<dbReference type="SUPFAM" id="SSF52540">
    <property type="entry name" value="P-loop containing nucleoside triphosphate hydrolases"/>
    <property type="match status" value="1"/>
</dbReference>
<dbReference type="PROSITE" id="PS51421">
    <property type="entry name" value="RAS"/>
    <property type="match status" value="1"/>
</dbReference>
<reference key="1">
    <citation type="submission" date="2004-11" db="EMBL/GenBank/DDBJ databases">
        <authorList>
            <consortium name="The German cDNA consortium"/>
        </authorList>
    </citation>
    <scope>NUCLEOTIDE SEQUENCE [LARGE SCALE MRNA]</scope>
    <source>
        <tissue>Brain cortex</tissue>
        <tissue>Kidney</tissue>
    </source>
</reference>
<name>RAP1B_PONAB</name>
<comment type="function">
    <text evidence="2">GTP-binding protein that possesses intrinsic GTPase activity. Contributes to the polarizing activity of KRIT1 and CDH5 in the establishment and maintenance of correct endothelial cell polarity and vascular lumen. Required for the localization of phosphorylated PRKCZ, PARD3 and TIAM1 to the cell junction. Plays a role in the establishment of basal endothelial barrier function (By similarity).</text>
</comment>
<comment type="catalytic activity">
    <reaction evidence="2">
        <text>GTP + H2O = GDP + phosphate + H(+)</text>
        <dbReference type="Rhea" id="RHEA:19669"/>
        <dbReference type="ChEBI" id="CHEBI:15377"/>
        <dbReference type="ChEBI" id="CHEBI:15378"/>
        <dbReference type="ChEBI" id="CHEBI:37565"/>
        <dbReference type="ChEBI" id="CHEBI:43474"/>
        <dbReference type="ChEBI" id="CHEBI:58189"/>
        <dbReference type="EC" id="3.6.5.2"/>
    </reaction>
</comment>
<comment type="activity regulation">
    <text evidence="2">Activated by guanine nucleotide-exchange factor (GEF) EPAC2 in a cAMP-dependent manner.</text>
</comment>
<comment type="subunit">
    <text evidence="2">Heterodimer with RAP1GAP (By similarity). Interacts with EPAC2 (By similarity). Interacts with SGSM1 (By similarity). Interacts with SGSM2 (By similarity). Interacts with SGSM3 (By similarity). Interacts with KRIT1 (By similarity). Interacts with RAP1GDS1 (By similarity).</text>
</comment>
<comment type="subcellular location">
    <subcellularLocation>
        <location evidence="2">Cell membrane</location>
    </subcellularLocation>
    <subcellularLocation>
        <location evidence="2">Cytoplasm</location>
        <location evidence="2">Cytosol</location>
    </subcellularLocation>
    <subcellularLocation>
        <location evidence="2">Cell junction</location>
    </subcellularLocation>
    <text evidence="2">May shuttle between plasma membrane and cytosol (By similarity). Presence of KRIT1 and CDH5 is required for its localization to the cell junction (By similarity).</text>
</comment>
<comment type="similarity">
    <text evidence="3">Belongs to the small GTPase superfamily. Ras family.</text>
</comment>
<feature type="chain" id="PRO_0000229759" description="Ras-related protein Rap-1b">
    <location>
        <begin position="1"/>
        <end position="181"/>
    </location>
</feature>
<feature type="propeptide" id="PRO_0000229760" description="Removed in mature form" evidence="1">
    <location>
        <begin position="182"/>
        <end position="184"/>
    </location>
</feature>
<feature type="region of interest" description="Interaction with KRIT1" evidence="2">
    <location>
        <begin position="25"/>
        <end position="67"/>
    </location>
</feature>
<feature type="short sequence motif" description="Effector region" evidence="3">
    <location>
        <begin position="32"/>
        <end position="40"/>
    </location>
</feature>
<feature type="binding site" evidence="2">
    <location>
        <begin position="10"/>
        <end position="18"/>
    </location>
    <ligand>
        <name>GTP</name>
        <dbReference type="ChEBI" id="CHEBI:37565"/>
    </ligand>
</feature>
<feature type="binding site" evidence="2">
    <location>
        <begin position="57"/>
        <end position="61"/>
    </location>
    <ligand>
        <name>GTP</name>
        <dbReference type="ChEBI" id="CHEBI:37565"/>
    </ligand>
</feature>
<feature type="binding site" evidence="2">
    <location>
        <begin position="116"/>
        <end position="119"/>
    </location>
    <ligand>
        <name>GTP</name>
        <dbReference type="ChEBI" id="CHEBI:37565"/>
    </ligand>
</feature>
<feature type="binding site" evidence="2">
    <location>
        <begin position="147"/>
        <end position="149"/>
    </location>
    <ligand>
        <name>GTP</name>
        <dbReference type="ChEBI" id="CHEBI:37565"/>
    </ligand>
</feature>
<feature type="modified residue" description="ADP-ribosylserine; by botulinum toxin" evidence="1">
    <location>
        <position position="39"/>
    </location>
</feature>
<feature type="modified residue" description="Phosphoserine; by PKA" evidence="2">
    <location>
        <position position="179"/>
    </location>
</feature>
<feature type="modified residue" description="Cysteine methyl ester" evidence="2">
    <location>
        <position position="181"/>
    </location>
</feature>
<feature type="lipid moiety-binding region" description="S-geranylgeranyl cysteine" evidence="2">
    <location>
        <position position="181"/>
    </location>
</feature>
<gene>
    <name type="primary">RAP1B</name>
</gene>
<organism>
    <name type="scientific">Pongo abelii</name>
    <name type="common">Sumatran orangutan</name>
    <name type="synonym">Pongo pygmaeus abelii</name>
    <dbReference type="NCBI Taxonomy" id="9601"/>
    <lineage>
        <taxon>Eukaryota</taxon>
        <taxon>Metazoa</taxon>
        <taxon>Chordata</taxon>
        <taxon>Craniata</taxon>
        <taxon>Vertebrata</taxon>
        <taxon>Euteleostomi</taxon>
        <taxon>Mammalia</taxon>
        <taxon>Eutheria</taxon>
        <taxon>Euarchontoglires</taxon>
        <taxon>Primates</taxon>
        <taxon>Haplorrhini</taxon>
        <taxon>Catarrhini</taxon>
        <taxon>Hominidae</taxon>
        <taxon>Pongo</taxon>
    </lineage>
</organism>
<proteinExistence type="evidence at transcript level"/>
<accession>Q5RDM6</accession>
<evidence type="ECO:0000250" key="1"/>
<evidence type="ECO:0000250" key="2">
    <source>
        <dbReference type="UniProtKB" id="P61224"/>
    </source>
</evidence>
<evidence type="ECO:0000305" key="3"/>
<protein>
    <recommendedName>
        <fullName>Ras-related protein Rap-1b</fullName>
        <ecNumber evidence="2">3.6.5.2</ecNumber>
    </recommendedName>
</protein>
<keyword id="KW-0013">ADP-ribosylation</keyword>
<keyword id="KW-0965">Cell junction</keyword>
<keyword id="KW-1003">Cell membrane</keyword>
<keyword id="KW-0963">Cytoplasm</keyword>
<keyword id="KW-0342">GTP-binding</keyword>
<keyword id="KW-0378">Hydrolase</keyword>
<keyword id="KW-0449">Lipoprotein</keyword>
<keyword id="KW-0472">Membrane</keyword>
<keyword id="KW-0488">Methylation</keyword>
<keyword id="KW-0547">Nucleotide-binding</keyword>
<keyword id="KW-0597">Phosphoprotein</keyword>
<keyword id="KW-0636">Prenylation</keyword>
<keyword id="KW-1185">Reference proteome</keyword>
<sequence length="184" mass="20825">MREYKLVVLGSGGVGKSALTVQFVQGIFVEKYDPTIEDSYRKQVEVDAQQCMLEILDTAGTEQFTAMRDLYMKNGQGFALVYSITAQSTFNDLQDLREQILRVKDTDDVPMILVGNKCDLEDERVVGKEQGQNLARQWNNCAFLESSAKSKINVNEIFYDLVRQINRKTPVPGKARKKSSCQLL</sequence>